<sequence length="346" mass="37228">MSFRTIEWRDDKVIMIDQTRLPGEEVYCEYGDYKSVAEAIRGMIIRGAPAIGVAAAMGVALGAREIIADTHESFLRQLDNVCDVLARTRPTAVNLFWAIERMKRVAADNCGGSLDEVREVLKAEAIRIEEEDLALCKAIGRHGAGLIPEGATVLTHCNAGGLATAGYGTALGVIRAAHEAGKNIQVFADETRPWLQGARLTAWELMKDGIPVTLISDNMAGFFMKRGEITCCVVGADRIAANGDTANKIGTYSVAVLAKENNIPFYVAAPTSTLDLSLENGDQIPIEERHAREVTHLQGLPVAPEGIAVRNPAFDVTPARYIAGIITEKGVITGDYTAKLKALVKP</sequence>
<organism>
    <name type="scientific">Geobacter metallireducens (strain ATCC 53774 / DSM 7210 / GS-15)</name>
    <dbReference type="NCBI Taxonomy" id="269799"/>
    <lineage>
        <taxon>Bacteria</taxon>
        <taxon>Pseudomonadati</taxon>
        <taxon>Thermodesulfobacteriota</taxon>
        <taxon>Desulfuromonadia</taxon>
        <taxon>Geobacterales</taxon>
        <taxon>Geobacteraceae</taxon>
        <taxon>Geobacter</taxon>
    </lineage>
</organism>
<comment type="function">
    <text evidence="1">Catalyzes the interconversion of methylthioribose-1-phosphate (MTR-1-P) into methylthioribulose-1-phosphate (MTRu-1-P).</text>
</comment>
<comment type="catalytic activity">
    <reaction evidence="1">
        <text>5-(methylsulfanyl)-alpha-D-ribose 1-phosphate = 5-(methylsulfanyl)-D-ribulose 1-phosphate</text>
        <dbReference type="Rhea" id="RHEA:19989"/>
        <dbReference type="ChEBI" id="CHEBI:58533"/>
        <dbReference type="ChEBI" id="CHEBI:58548"/>
        <dbReference type="EC" id="5.3.1.23"/>
    </reaction>
</comment>
<comment type="pathway">
    <text evidence="1">Amino-acid biosynthesis; L-methionine biosynthesis via salvage pathway; L-methionine from S-methyl-5-thio-alpha-D-ribose 1-phosphate: step 1/6.</text>
</comment>
<comment type="similarity">
    <text evidence="2">Belongs to the eIF-2B alpha/beta/delta subunits family. MtnA subfamily.</text>
</comment>
<feature type="chain" id="PRO_0000357188" description="Methylthioribose-1-phosphate isomerase">
    <location>
        <begin position="1"/>
        <end position="346"/>
    </location>
</feature>
<feature type="active site" description="Proton donor" evidence="1">
    <location>
        <position position="237"/>
    </location>
</feature>
<feature type="binding site" evidence="1">
    <location>
        <begin position="46"/>
        <end position="48"/>
    </location>
    <ligand>
        <name>substrate</name>
    </ligand>
</feature>
<feature type="binding site" evidence="1">
    <location>
        <position position="89"/>
    </location>
    <ligand>
        <name>substrate</name>
    </ligand>
</feature>
<feature type="binding site" evidence="1">
    <location>
        <position position="196"/>
    </location>
    <ligand>
        <name>substrate</name>
    </ligand>
</feature>
<feature type="binding site" evidence="1">
    <location>
        <begin position="247"/>
        <end position="248"/>
    </location>
    <ligand>
        <name>substrate</name>
    </ligand>
</feature>
<feature type="site" description="Transition state stabilizer" evidence="1">
    <location>
        <position position="157"/>
    </location>
</feature>
<protein>
    <recommendedName>
        <fullName evidence="1">Methylthioribose-1-phosphate isomerase</fullName>
        <shortName evidence="1">M1Pi</shortName>
        <shortName evidence="1">MTR-1-P isomerase</shortName>
        <ecNumber evidence="1">5.3.1.23</ecNumber>
    </recommendedName>
    <alternativeName>
        <fullName evidence="1">S-methyl-5-thioribose-1-phosphate isomerase</fullName>
    </alternativeName>
</protein>
<accession>Q39ZK3</accession>
<keyword id="KW-0028">Amino-acid biosynthesis</keyword>
<keyword id="KW-0413">Isomerase</keyword>
<keyword id="KW-0486">Methionine biosynthesis</keyword>
<keyword id="KW-1185">Reference proteome</keyword>
<evidence type="ECO:0000255" key="1">
    <source>
        <dbReference type="HAMAP-Rule" id="MF_01678"/>
    </source>
</evidence>
<evidence type="ECO:0000305" key="2"/>
<dbReference type="EC" id="5.3.1.23" evidence="1"/>
<dbReference type="EMBL" id="CP000148">
    <property type="protein sequence ID" value="ABB30321.1"/>
    <property type="molecule type" value="Genomic_DNA"/>
</dbReference>
<dbReference type="RefSeq" id="WP_004514196.1">
    <property type="nucleotide sequence ID" value="NC_007517.1"/>
</dbReference>
<dbReference type="SMR" id="Q39ZK3"/>
<dbReference type="STRING" id="269799.Gmet_0072"/>
<dbReference type="KEGG" id="gme:Gmet_0072"/>
<dbReference type="eggNOG" id="COG0182">
    <property type="taxonomic scope" value="Bacteria"/>
</dbReference>
<dbReference type="HOGENOM" id="CLU_016218_1_2_7"/>
<dbReference type="UniPathway" id="UPA00904">
    <property type="reaction ID" value="UER00874"/>
</dbReference>
<dbReference type="Proteomes" id="UP000007073">
    <property type="component" value="Chromosome"/>
</dbReference>
<dbReference type="GO" id="GO:0046523">
    <property type="term" value="F:S-methyl-5-thioribose-1-phosphate isomerase activity"/>
    <property type="evidence" value="ECO:0007669"/>
    <property type="project" value="UniProtKB-UniRule"/>
</dbReference>
<dbReference type="GO" id="GO:0019509">
    <property type="term" value="P:L-methionine salvage from methylthioadenosine"/>
    <property type="evidence" value="ECO:0007669"/>
    <property type="project" value="UniProtKB-UniRule"/>
</dbReference>
<dbReference type="FunFam" id="1.20.120.420:FF:000001">
    <property type="entry name" value="Methylthioribose-1-phosphate isomerase"/>
    <property type="match status" value="1"/>
</dbReference>
<dbReference type="FunFam" id="3.40.50.10470:FF:000010">
    <property type="entry name" value="Methylthioribose-1-phosphate isomerase"/>
    <property type="match status" value="1"/>
</dbReference>
<dbReference type="Gene3D" id="1.20.120.420">
    <property type="entry name" value="translation initiation factor eif-2b, domain 1"/>
    <property type="match status" value="1"/>
</dbReference>
<dbReference type="Gene3D" id="3.40.50.10470">
    <property type="entry name" value="Translation initiation factor eif-2b, domain 2"/>
    <property type="match status" value="1"/>
</dbReference>
<dbReference type="HAMAP" id="MF_01678">
    <property type="entry name" value="Salvage_MtnA"/>
    <property type="match status" value="1"/>
</dbReference>
<dbReference type="InterPro" id="IPR000649">
    <property type="entry name" value="IF-2B-related"/>
</dbReference>
<dbReference type="InterPro" id="IPR005251">
    <property type="entry name" value="IF-M1Pi"/>
</dbReference>
<dbReference type="InterPro" id="IPR042529">
    <property type="entry name" value="IF_2B-like_C"/>
</dbReference>
<dbReference type="InterPro" id="IPR011559">
    <property type="entry name" value="Initiation_fac_2B_a/b/d"/>
</dbReference>
<dbReference type="InterPro" id="IPR027363">
    <property type="entry name" value="M1Pi_N"/>
</dbReference>
<dbReference type="InterPro" id="IPR037171">
    <property type="entry name" value="NagB/RpiA_transferase-like"/>
</dbReference>
<dbReference type="NCBIfam" id="TIGR00524">
    <property type="entry name" value="eIF-2B_rel"/>
    <property type="match status" value="1"/>
</dbReference>
<dbReference type="NCBIfam" id="NF004326">
    <property type="entry name" value="PRK05720.1"/>
    <property type="match status" value="1"/>
</dbReference>
<dbReference type="NCBIfam" id="TIGR00512">
    <property type="entry name" value="salvage_mtnA"/>
    <property type="match status" value="1"/>
</dbReference>
<dbReference type="PANTHER" id="PTHR43475">
    <property type="entry name" value="METHYLTHIORIBOSE-1-PHOSPHATE ISOMERASE"/>
    <property type="match status" value="1"/>
</dbReference>
<dbReference type="PANTHER" id="PTHR43475:SF1">
    <property type="entry name" value="METHYLTHIORIBOSE-1-PHOSPHATE ISOMERASE"/>
    <property type="match status" value="1"/>
</dbReference>
<dbReference type="Pfam" id="PF01008">
    <property type="entry name" value="IF-2B"/>
    <property type="match status" value="1"/>
</dbReference>
<dbReference type="SUPFAM" id="SSF100950">
    <property type="entry name" value="NagB/RpiA/CoA transferase-like"/>
    <property type="match status" value="1"/>
</dbReference>
<name>MTNA_GEOMG</name>
<reference key="1">
    <citation type="journal article" date="2009" name="BMC Microbiol.">
        <title>The genome sequence of Geobacter metallireducens: features of metabolism, physiology and regulation common and dissimilar to Geobacter sulfurreducens.</title>
        <authorList>
            <person name="Aklujkar M."/>
            <person name="Krushkal J."/>
            <person name="DiBartolo G."/>
            <person name="Lapidus A."/>
            <person name="Land M.L."/>
            <person name="Lovley D.R."/>
        </authorList>
    </citation>
    <scope>NUCLEOTIDE SEQUENCE [LARGE SCALE GENOMIC DNA]</scope>
    <source>
        <strain>ATCC 53774 / DSM 7210 / GS-15</strain>
    </source>
</reference>
<gene>
    <name evidence="1" type="primary">mtnA</name>
    <name type="ordered locus">Gmet_0072</name>
</gene>
<proteinExistence type="inferred from homology"/>